<evidence type="ECO:0000255" key="1">
    <source>
        <dbReference type="HAMAP-Rule" id="MF_00227"/>
    </source>
</evidence>
<comment type="function">
    <text evidence="1">RNaseP catalyzes the removal of the 5'-leader sequence from pre-tRNA to produce the mature 5'-terminus. It can also cleave other RNA substrates such as 4.5S RNA. The protein component plays an auxiliary but essential role in vivo by binding to the 5'-leader sequence and broadening the substrate specificity of the ribozyme.</text>
</comment>
<comment type="catalytic activity">
    <reaction evidence="1">
        <text>Endonucleolytic cleavage of RNA, removing 5'-extranucleotides from tRNA precursor.</text>
        <dbReference type="EC" id="3.1.26.5"/>
    </reaction>
</comment>
<comment type="subunit">
    <text evidence="1">Consists of a catalytic RNA component (M1 or rnpB) and a protein subunit.</text>
</comment>
<comment type="similarity">
    <text evidence="1">Belongs to the RnpA family.</text>
</comment>
<keyword id="KW-0255">Endonuclease</keyword>
<keyword id="KW-0378">Hydrolase</keyword>
<keyword id="KW-0540">Nuclease</keyword>
<keyword id="KW-0694">RNA-binding</keyword>
<keyword id="KW-0819">tRNA processing</keyword>
<name>RNPA_BURMS</name>
<reference key="1">
    <citation type="journal article" date="2010" name="Genome Biol. Evol.">
        <title>Continuing evolution of Burkholderia mallei through genome reduction and large-scale rearrangements.</title>
        <authorList>
            <person name="Losada L."/>
            <person name="Ronning C.M."/>
            <person name="DeShazer D."/>
            <person name="Woods D."/>
            <person name="Fedorova N."/>
            <person name="Kim H.S."/>
            <person name="Shabalina S.A."/>
            <person name="Pearson T.R."/>
            <person name="Brinkac L."/>
            <person name="Tan P."/>
            <person name="Nandi T."/>
            <person name="Crabtree J."/>
            <person name="Badger J."/>
            <person name="Beckstrom-Sternberg S."/>
            <person name="Saqib M."/>
            <person name="Schutzer S.E."/>
            <person name="Keim P."/>
            <person name="Nierman W.C."/>
        </authorList>
    </citation>
    <scope>NUCLEOTIDE SEQUENCE [LARGE SCALE GENOMIC DNA]</scope>
    <source>
        <strain>SAVP1</strain>
    </source>
</reference>
<sequence length="136" mass="15247">MQASAAFPKAARLLKTDEFSSVFRLRPWRRTAHFVIYGKPTGRDARLGLVIGKKYAARAVTRNLVKRLAREAFRTRRAEFAGWDILLRLHTRFDKKAMPSAASAPLAALCAGEIRELLDRAAREVARRNGAKPASE</sequence>
<accession>A1V7D7</accession>
<organism>
    <name type="scientific">Burkholderia mallei (strain SAVP1)</name>
    <dbReference type="NCBI Taxonomy" id="320388"/>
    <lineage>
        <taxon>Bacteria</taxon>
        <taxon>Pseudomonadati</taxon>
        <taxon>Pseudomonadota</taxon>
        <taxon>Betaproteobacteria</taxon>
        <taxon>Burkholderiales</taxon>
        <taxon>Burkholderiaceae</taxon>
        <taxon>Burkholderia</taxon>
        <taxon>pseudomallei group</taxon>
    </lineage>
</organism>
<feature type="chain" id="PRO_1000021383" description="Ribonuclease P protein component">
    <location>
        <begin position="1"/>
        <end position="136"/>
    </location>
</feature>
<proteinExistence type="inferred from homology"/>
<gene>
    <name evidence="1" type="primary">rnpA</name>
    <name type="ordered locus">BMASAVP1_A2846</name>
</gene>
<dbReference type="EC" id="3.1.26.5" evidence="1"/>
<dbReference type="EMBL" id="CP000526">
    <property type="protein sequence ID" value="ABM51540.1"/>
    <property type="molecule type" value="Genomic_DNA"/>
</dbReference>
<dbReference type="SMR" id="A1V7D7"/>
<dbReference type="KEGG" id="bmv:BMASAVP1_A2846"/>
<dbReference type="HOGENOM" id="CLU_117179_11_1_4"/>
<dbReference type="GO" id="GO:0030677">
    <property type="term" value="C:ribonuclease P complex"/>
    <property type="evidence" value="ECO:0007669"/>
    <property type="project" value="TreeGrafter"/>
</dbReference>
<dbReference type="GO" id="GO:0042781">
    <property type="term" value="F:3'-tRNA processing endoribonuclease activity"/>
    <property type="evidence" value="ECO:0007669"/>
    <property type="project" value="TreeGrafter"/>
</dbReference>
<dbReference type="GO" id="GO:0004526">
    <property type="term" value="F:ribonuclease P activity"/>
    <property type="evidence" value="ECO:0007669"/>
    <property type="project" value="UniProtKB-UniRule"/>
</dbReference>
<dbReference type="GO" id="GO:0000049">
    <property type="term" value="F:tRNA binding"/>
    <property type="evidence" value="ECO:0007669"/>
    <property type="project" value="UniProtKB-UniRule"/>
</dbReference>
<dbReference type="GO" id="GO:0001682">
    <property type="term" value="P:tRNA 5'-leader removal"/>
    <property type="evidence" value="ECO:0007669"/>
    <property type="project" value="UniProtKB-UniRule"/>
</dbReference>
<dbReference type="Gene3D" id="3.30.230.10">
    <property type="match status" value="1"/>
</dbReference>
<dbReference type="HAMAP" id="MF_00227">
    <property type="entry name" value="RNase_P"/>
    <property type="match status" value="1"/>
</dbReference>
<dbReference type="InterPro" id="IPR020568">
    <property type="entry name" value="Ribosomal_Su5_D2-typ_SF"/>
</dbReference>
<dbReference type="InterPro" id="IPR014721">
    <property type="entry name" value="Ribsml_uS5_D2-typ_fold_subgr"/>
</dbReference>
<dbReference type="InterPro" id="IPR000100">
    <property type="entry name" value="RNase_P"/>
</dbReference>
<dbReference type="InterPro" id="IPR020539">
    <property type="entry name" value="RNase_P_CS"/>
</dbReference>
<dbReference type="NCBIfam" id="TIGR00188">
    <property type="entry name" value="rnpA"/>
    <property type="match status" value="1"/>
</dbReference>
<dbReference type="PANTHER" id="PTHR33992">
    <property type="entry name" value="RIBONUCLEASE P PROTEIN COMPONENT"/>
    <property type="match status" value="1"/>
</dbReference>
<dbReference type="PANTHER" id="PTHR33992:SF1">
    <property type="entry name" value="RIBONUCLEASE P PROTEIN COMPONENT"/>
    <property type="match status" value="1"/>
</dbReference>
<dbReference type="Pfam" id="PF00825">
    <property type="entry name" value="Ribonuclease_P"/>
    <property type="match status" value="1"/>
</dbReference>
<dbReference type="SUPFAM" id="SSF54211">
    <property type="entry name" value="Ribosomal protein S5 domain 2-like"/>
    <property type="match status" value="1"/>
</dbReference>
<dbReference type="PROSITE" id="PS00648">
    <property type="entry name" value="RIBONUCLEASE_P"/>
    <property type="match status" value="1"/>
</dbReference>
<protein>
    <recommendedName>
        <fullName evidence="1">Ribonuclease P protein component</fullName>
        <shortName evidence="1">RNase P protein</shortName>
        <shortName evidence="1">RNaseP protein</shortName>
        <ecNumber evidence="1">3.1.26.5</ecNumber>
    </recommendedName>
    <alternativeName>
        <fullName evidence="1">Protein C5</fullName>
    </alternativeName>
</protein>